<keyword id="KW-1064">Adaptive immunity</keyword>
<keyword id="KW-0094">Blood coagulation</keyword>
<keyword id="KW-0175">Coiled coil</keyword>
<keyword id="KW-0903">Direct protein sequencing</keyword>
<keyword id="KW-1015">Disulfide bond</keyword>
<keyword id="KW-0356">Hemostasis</keyword>
<keyword id="KW-0391">Immunity</keyword>
<keyword id="KW-0399">Innate immunity</keyword>
<keyword id="KW-0873">Pyrrolidone carboxylic acid</keyword>
<keyword id="KW-0964">Secreted</keyword>
<evidence type="ECO:0000250" key="1">
    <source>
        <dbReference type="UniProtKB" id="E9PV24"/>
    </source>
</evidence>
<evidence type="ECO:0000250" key="2">
    <source>
        <dbReference type="UniProtKB" id="P02675"/>
    </source>
</evidence>
<evidence type="ECO:0000269" key="3">
    <source>
    </source>
</evidence>
<sequence length="13" mass="1407">QGVBBBZGLFSAR</sequence>
<dbReference type="GO" id="GO:0005576">
    <property type="term" value="C:extracellular region"/>
    <property type="evidence" value="ECO:0007669"/>
    <property type="project" value="UniProtKB-SubCell"/>
</dbReference>
<dbReference type="GO" id="GO:0002250">
    <property type="term" value="P:adaptive immune response"/>
    <property type="evidence" value="ECO:0007669"/>
    <property type="project" value="UniProtKB-KW"/>
</dbReference>
<dbReference type="GO" id="GO:0007596">
    <property type="term" value="P:blood coagulation"/>
    <property type="evidence" value="ECO:0007669"/>
    <property type="project" value="UniProtKB-KW"/>
</dbReference>
<dbReference type="GO" id="GO:0045087">
    <property type="term" value="P:innate immune response"/>
    <property type="evidence" value="ECO:0007669"/>
    <property type="project" value="UniProtKB-KW"/>
</dbReference>
<organism>
    <name type="scientific">Hylobates lar</name>
    <name type="common">Lar gibbon</name>
    <name type="synonym">White-handed gibbon</name>
    <dbReference type="NCBI Taxonomy" id="9580"/>
    <lineage>
        <taxon>Eukaryota</taxon>
        <taxon>Metazoa</taxon>
        <taxon>Chordata</taxon>
        <taxon>Craniata</taxon>
        <taxon>Vertebrata</taxon>
        <taxon>Euteleostomi</taxon>
        <taxon>Mammalia</taxon>
        <taxon>Eutheria</taxon>
        <taxon>Euarchontoglires</taxon>
        <taxon>Primates</taxon>
        <taxon>Haplorrhini</taxon>
        <taxon>Catarrhini</taxon>
        <taxon>Hylobatidae</taxon>
        <taxon>Hylobates</taxon>
    </lineage>
</organism>
<protein>
    <recommendedName>
        <fullName>Fibrinogen beta chain</fullName>
    </recommendedName>
    <component>
        <recommendedName>
            <fullName>Fibrinopeptide B</fullName>
        </recommendedName>
    </component>
</protein>
<gene>
    <name type="primary">FGB</name>
</gene>
<comment type="function">
    <text evidence="1">Cleaved by the protease thrombin to yield monomers which, together with fibrinogen alpha (FGA) and fibrinogen gamma (FGG), polymerize to form an insoluble fibrin matrix. Fibrin has a major function in hemostasis as one of the primary components of blood clots. In addition, functions during the early stages of wound repair to stabilize the lesion and guide cell migration during re-epithelialization. Was originally thought to be essential for platelet aggregation, based on in vitro studies using anticoagulated blood. However subsequent studies have shown that it is not absolutely required for thrombus formation in vivo. Enhances expression of SELP in activated platelets. Maternal fibrinogen is essential for successful pregnancy. Fibrin deposition is also associated with infection, where it protects against IFNG-mediated hemorrhage. May also facilitate the antibacterial immune response via both innate and T-cell mediated pathways.</text>
</comment>
<comment type="subunit">
    <text evidence="2">Heterohexamer; disulfide linked. Contains 2 sets of 3 non-identical chains (alpha, beta and gamma). The 2 heterotrimers are in head to head conformation with the N-termini in a small central domain (By similarity).</text>
</comment>
<comment type="subcellular location">
    <subcellularLocation>
        <location>Secreted</location>
    </subcellularLocation>
</comment>
<comment type="domain">
    <text evidence="2">A long coiled coil structure formed by 3 polypeptide chains connects the central nodule to the C-terminal domains (distal nodules). The long C-terminal ends of the alpha chains fold back, contributing a fourth strand to the coiled coil structure.</text>
</comment>
<comment type="PTM">
    <text>Conversion of fibrinogen to fibrin is triggered by thrombin, which cleaves fibrinopeptides A and B from alpha and beta chains, and thus exposes the N-terminal polymerization sites responsible for the formation of the soft clot.</text>
</comment>
<proteinExistence type="evidence at protein level"/>
<feature type="peptide" id="PRO_0000009072" description="Fibrinopeptide B">
    <location>
        <begin position="1"/>
        <end position="13"/>
    </location>
</feature>
<feature type="modified residue" description="Pyrrolidone carboxylic acid" evidence="3">
    <location>
        <position position="1"/>
    </location>
</feature>
<feature type="sequence variant">
    <original>S</original>
    <variation>G</variation>
    <location>
        <position position="11"/>
    </location>
</feature>
<feature type="non-terminal residue">
    <location>
        <position position="13"/>
    </location>
</feature>
<name>FIBB_HYLLA</name>
<accession>P14472</accession>
<reference key="1">
    <citation type="journal article" date="1970" name="Science">
        <title>Gibbon fibrinopeptides: identification of a glycine-serine allelism at position B-3.</title>
        <authorList>
            <person name="Mross G.A."/>
            <person name="Doolittle R.F."/>
            <person name="Roberts B.F."/>
        </authorList>
    </citation>
    <scope>PROTEIN SEQUENCE</scope>
    <scope>PYROGLUTAMATE FORMATION AT GLN-1</scope>
</reference>